<proteinExistence type="evidence at protein level"/>
<dbReference type="EMBL" id="AEFA01000002">
    <property type="protein sequence ID" value="EFM55010.1"/>
    <property type="molecule type" value="Genomic_DNA"/>
</dbReference>
<dbReference type="RefSeq" id="WP_000355946.1">
    <property type="nucleotide sequence ID" value="NZ_CP047057.1"/>
</dbReference>
<dbReference type="PDB" id="5I4Q">
    <property type="method" value="X-ray"/>
    <property type="resolution" value="2.35 A"/>
    <property type="chains" value="B=1-106"/>
</dbReference>
<dbReference type="PDB" id="5I4R">
    <property type="method" value="X-ray"/>
    <property type="resolution" value="3.30 A"/>
    <property type="chains" value="B/F=1-106"/>
</dbReference>
<dbReference type="PDBsum" id="5I4Q"/>
<dbReference type="PDBsum" id="5I4R"/>
<dbReference type="SMR" id="P0DSM8"/>
<dbReference type="CDD" id="cd21060">
    <property type="entry name" value="CdiI_NC101"/>
    <property type="match status" value="1"/>
</dbReference>
<dbReference type="InterPro" id="IPR049759">
    <property type="entry name" value="CdiI-like"/>
</dbReference>
<sequence length="106" mass="13065">MDIWPEFQRDLEMYRDVVLSIKRNLRLYEECIESLVHQIGSTNFDNAQPLFDDLFRMQSELATMLYKYEYKPGKRIQDLIYHLDRDDFYSRKYWHKKFSDGLAWPE</sequence>
<evidence type="ECO:0000269" key="1">
    <source>
    </source>
</evidence>
<evidence type="ECO:0000269" key="2">
    <source>
    </source>
</evidence>
<evidence type="ECO:0000303" key="3">
    <source>
    </source>
</evidence>
<evidence type="ECO:0000305" key="4">
    <source>
    </source>
</evidence>
<evidence type="ECO:0007744" key="5">
    <source>
        <dbReference type="PDB" id="5I4Q"/>
    </source>
</evidence>
<evidence type="ECO:0007744" key="6">
    <source>
        <dbReference type="PDB" id="5I4R"/>
    </source>
</evidence>
<evidence type="ECO:0007829" key="7">
    <source>
        <dbReference type="PDB" id="5I4Q"/>
    </source>
</evidence>
<name>CDII_ECONC</name>
<feature type="chain" id="PRO_0000447224" description="Immunity protein CdiI">
    <location>
        <begin position="1"/>
        <end position="106"/>
    </location>
</feature>
<feature type="helix" evidence="7">
    <location>
        <begin position="4"/>
        <end position="40"/>
    </location>
</feature>
<feature type="helix" evidence="7">
    <location>
        <begin position="44"/>
        <end position="66"/>
    </location>
</feature>
<feature type="helix" evidence="7">
    <location>
        <begin position="74"/>
        <end position="82"/>
    </location>
</feature>
<feature type="helix" evidence="7">
    <location>
        <begin position="88"/>
        <end position="99"/>
    </location>
</feature>
<keyword id="KW-0002">3D-structure</keyword>
<reference key="1">
    <citation type="submission" date="2010-04" db="EMBL/GenBank/DDBJ databases">
        <authorList>
            <person name="Suzuki H."/>
            <person name="Richards V."/>
            <person name="Lefebure T."/>
            <person name="Pavinski Bitar P."/>
            <person name="Lang P."/>
            <person name="Stanhope M."/>
        </authorList>
    </citation>
    <scope>NUCLEOTIDE SEQUENCE [LARGE SCALE GENOMIC DNA]</scope>
    <source>
        <strain>NC101</strain>
    </source>
</reference>
<reference key="2">
    <citation type="journal article" date="2015" name="Proc. Natl. Acad. Sci. U.S.A.">
        <title>Contact-dependent growth inhibition toxins exploit multiple independent cell-entry pathways.</title>
        <authorList>
            <person name="Willett J.L."/>
            <person name="Gucinski G.C."/>
            <person name="Fatherree J.P."/>
            <person name="Low D.A."/>
            <person name="Hayes C.S."/>
        </authorList>
    </citation>
    <scope>FUNCTION</scope>
    <source>
        <strain>NC101</strain>
    </source>
</reference>
<reference evidence="5 6" key="3">
    <citation type="journal article" date="2017" name="Nucleic Acids Res.">
        <title>Structure of a novel antibacterial toxin that exploits elongation factor Tu to cleave specific transfer RNAs.</title>
        <authorList>
            <person name="Michalska K."/>
            <person name="Gucinski G.C."/>
            <person name="Garza-Sanchez F."/>
            <person name="Johnson P.M."/>
            <person name="Stols L.M."/>
            <person name="Eschenfeldt W.H."/>
            <person name="Babnigg G."/>
            <person name="Low D.A."/>
            <person name="Goulding C.W."/>
            <person name="Joachimiak A."/>
            <person name="Hayes C.S."/>
        </authorList>
    </citation>
    <scope>X-RAY CRYSTALLOGRAPHY (3.30 ANGSTROMS) IN COMPLEX WITH GDP; EF-TU AND CDIA-CT-NC101</scope>
    <scope>FUNCTION</scope>
    <scope>SUBUNIT</scope>
    <source>
        <strain>NC101</strain>
    </source>
</reference>
<accession>P0DSM8</accession>
<comment type="function">
    <text evidence="1 2 4">Immunity protein component of a toxin-immunity protein module, which functions as a cellular contact-dependent growth inhibition (CDI) system. CDI modules allow bacteria to communicate with and inhibit the growth of closely related neighboring bacteria in a contact-dependent fashion. Neutralizes the toxic activity of cognate toxin CdiA-NC101 (the C-terminal 154 residue CT fragment) (PubMed:26305955). Does not inhibit toxic activity of CdiA from other toxin-immunity modules or strains of E.coli (Probable). Mediates dimerization of the ternary CdiA-CT-NC101, CdiI-NC101 and EF-Tu complex; both CdiI molecules contact both EF-Tu molecules (PubMed:28973472).</text>
</comment>
<comment type="subunit">
    <text evidence="2">Forms a contact-dependent growth inhibition complex of CdiA-CT-NC101, CdiI-NC101 and EF-Tu; the complex is a dimer of heterotrimers.</text>
</comment>
<organism>
    <name type="scientific">Escherichia coli (strain NC101)</name>
    <dbReference type="NCBI Taxonomy" id="753642"/>
    <lineage>
        <taxon>Bacteria</taxon>
        <taxon>Pseudomonadati</taxon>
        <taxon>Pseudomonadota</taxon>
        <taxon>Gammaproteobacteria</taxon>
        <taxon>Enterobacterales</taxon>
        <taxon>Enterobacteriaceae</taxon>
        <taxon>Escherichia</taxon>
    </lineage>
</organism>
<gene>
    <name evidence="3" type="primary">cdiI</name>
    <name type="ORF">ECNC101_09169</name>
</gene>
<protein>
    <recommendedName>
        <fullName evidence="3">Immunity protein CdiI</fullName>
    </recommendedName>
    <alternativeName>
        <fullName>CdiI-NC101</fullName>
    </alternativeName>
</protein>